<name>YBEY_CHRFK</name>
<proteinExistence type="inferred from homology"/>
<gene>
    <name evidence="1" type="primary">ybeY</name>
    <name type="ordered locus">GFO_3300</name>
</gene>
<evidence type="ECO:0000255" key="1">
    <source>
        <dbReference type="HAMAP-Rule" id="MF_00009"/>
    </source>
</evidence>
<keyword id="KW-0963">Cytoplasm</keyword>
<keyword id="KW-0255">Endonuclease</keyword>
<keyword id="KW-0378">Hydrolase</keyword>
<keyword id="KW-0479">Metal-binding</keyword>
<keyword id="KW-0540">Nuclease</keyword>
<keyword id="KW-0690">Ribosome biogenesis</keyword>
<keyword id="KW-0698">rRNA processing</keyword>
<keyword id="KW-0862">Zinc</keyword>
<accession>A0M6J8</accession>
<protein>
    <recommendedName>
        <fullName evidence="1">Endoribonuclease YbeY</fullName>
        <ecNumber evidence="1">3.1.-.-</ecNumber>
    </recommendedName>
</protein>
<comment type="function">
    <text evidence="1">Single strand-specific metallo-endoribonuclease involved in late-stage 70S ribosome quality control and in maturation of the 3' terminus of the 16S rRNA.</text>
</comment>
<comment type="cofactor">
    <cofactor evidence="1">
        <name>Zn(2+)</name>
        <dbReference type="ChEBI" id="CHEBI:29105"/>
    </cofactor>
    <text evidence="1">Binds 1 zinc ion.</text>
</comment>
<comment type="subcellular location">
    <subcellularLocation>
        <location evidence="1">Cytoplasm</location>
    </subcellularLocation>
</comment>
<comment type="similarity">
    <text evidence="1">Belongs to the endoribonuclease YbeY family.</text>
</comment>
<sequence length="143" mass="17159">MEKGEINFFSENDFVLNREQDYRNWIEKAIESENKYIGDISFIFCDDEYLHKINLEYLAHDTYTDIISFDNTLGNTLQGDIYISTERVQENANSFNTEFDEELKRVLIHGILHFCGFKDKTEREQELMRRKEEEKIALFHVEQ</sequence>
<dbReference type="EC" id="3.1.-.-" evidence="1"/>
<dbReference type="EMBL" id="CU207366">
    <property type="protein sequence ID" value="CAL68243.1"/>
    <property type="molecule type" value="Genomic_DNA"/>
</dbReference>
<dbReference type="RefSeq" id="WP_011711144.1">
    <property type="nucleotide sequence ID" value="NC_008571.1"/>
</dbReference>
<dbReference type="SMR" id="A0M6J8"/>
<dbReference type="STRING" id="411154.GFO_3300"/>
<dbReference type="KEGG" id="gfo:GFO_3300"/>
<dbReference type="eggNOG" id="COG0319">
    <property type="taxonomic scope" value="Bacteria"/>
</dbReference>
<dbReference type="HOGENOM" id="CLU_106710_3_3_10"/>
<dbReference type="OrthoDB" id="9811984at2"/>
<dbReference type="Proteomes" id="UP000000755">
    <property type="component" value="Chromosome"/>
</dbReference>
<dbReference type="GO" id="GO:0005737">
    <property type="term" value="C:cytoplasm"/>
    <property type="evidence" value="ECO:0007669"/>
    <property type="project" value="UniProtKB-SubCell"/>
</dbReference>
<dbReference type="GO" id="GO:0004222">
    <property type="term" value="F:metalloendopeptidase activity"/>
    <property type="evidence" value="ECO:0007669"/>
    <property type="project" value="InterPro"/>
</dbReference>
<dbReference type="GO" id="GO:0004521">
    <property type="term" value="F:RNA endonuclease activity"/>
    <property type="evidence" value="ECO:0007669"/>
    <property type="project" value="UniProtKB-UniRule"/>
</dbReference>
<dbReference type="GO" id="GO:0008270">
    <property type="term" value="F:zinc ion binding"/>
    <property type="evidence" value="ECO:0007669"/>
    <property type="project" value="UniProtKB-UniRule"/>
</dbReference>
<dbReference type="GO" id="GO:0006364">
    <property type="term" value="P:rRNA processing"/>
    <property type="evidence" value="ECO:0007669"/>
    <property type="project" value="UniProtKB-UniRule"/>
</dbReference>
<dbReference type="Gene3D" id="3.40.390.30">
    <property type="entry name" value="Metalloproteases ('zincins'), catalytic domain"/>
    <property type="match status" value="1"/>
</dbReference>
<dbReference type="HAMAP" id="MF_00009">
    <property type="entry name" value="Endoribonucl_YbeY"/>
    <property type="match status" value="1"/>
</dbReference>
<dbReference type="InterPro" id="IPR023091">
    <property type="entry name" value="MetalPrtase_cat_dom_sf_prd"/>
</dbReference>
<dbReference type="InterPro" id="IPR002036">
    <property type="entry name" value="YbeY"/>
</dbReference>
<dbReference type="NCBIfam" id="TIGR00043">
    <property type="entry name" value="rRNA maturation RNase YbeY"/>
    <property type="match status" value="1"/>
</dbReference>
<dbReference type="PANTHER" id="PTHR46986">
    <property type="entry name" value="ENDORIBONUCLEASE YBEY, CHLOROPLASTIC"/>
    <property type="match status" value="1"/>
</dbReference>
<dbReference type="PANTHER" id="PTHR46986:SF1">
    <property type="entry name" value="ENDORIBONUCLEASE YBEY, CHLOROPLASTIC"/>
    <property type="match status" value="1"/>
</dbReference>
<dbReference type="Pfam" id="PF02130">
    <property type="entry name" value="YbeY"/>
    <property type="match status" value="1"/>
</dbReference>
<dbReference type="SUPFAM" id="SSF55486">
    <property type="entry name" value="Metalloproteases ('zincins'), catalytic domain"/>
    <property type="match status" value="1"/>
</dbReference>
<reference key="1">
    <citation type="journal article" date="2006" name="Environ. Microbiol.">
        <title>Whole genome analysis of the marine Bacteroidetes'Gramella forsetii' reveals adaptations to degradation of polymeric organic matter.</title>
        <authorList>
            <person name="Bauer M."/>
            <person name="Kube M."/>
            <person name="Teeling H."/>
            <person name="Richter M."/>
            <person name="Lombardot T."/>
            <person name="Allers E."/>
            <person name="Wuerdemann C.A."/>
            <person name="Quast C."/>
            <person name="Kuhl H."/>
            <person name="Knaust F."/>
            <person name="Woebken D."/>
            <person name="Bischof K."/>
            <person name="Mussmann M."/>
            <person name="Choudhuri J.V."/>
            <person name="Meyer F."/>
            <person name="Reinhardt R."/>
            <person name="Amann R.I."/>
            <person name="Gloeckner F.O."/>
        </authorList>
    </citation>
    <scope>NUCLEOTIDE SEQUENCE [LARGE SCALE GENOMIC DNA]</scope>
    <source>
        <strain>DSM 17595 / CGMCC 1.15422 / KT0803</strain>
    </source>
</reference>
<feature type="chain" id="PRO_0000284214" description="Endoribonuclease YbeY">
    <location>
        <begin position="1"/>
        <end position="143"/>
    </location>
</feature>
<feature type="binding site" evidence="1">
    <location>
        <position position="109"/>
    </location>
    <ligand>
        <name>Zn(2+)</name>
        <dbReference type="ChEBI" id="CHEBI:29105"/>
        <note>catalytic</note>
    </ligand>
</feature>
<feature type="binding site" evidence="1">
    <location>
        <position position="113"/>
    </location>
    <ligand>
        <name>Zn(2+)</name>
        <dbReference type="ChEBI" id="CHEBI:29105"/>
        <note>catalytic</note>
    </ligand>
</feature>
<feature type="binding site" evidence="1">
    <location>
        <position position="119"/>
    </location>
    <ligand>
        <name>Zn(2+)</name>
        <dbReference type="ChEBI" id="CHEBI:29105"/>
        <note>catalytic</note>
    </ligand>
</feature>
<organism>
    <name type="scientific">Christiangramia forsetii (strain DSM 17595 / CGMCC 1.15422 / KT0803)</name>
    <name type="common">Gramella forsetii</name>
    <dbReference type="NCBI Taxonomy" id="411154"/>
    <lineage>
        <taxon>Bacteria</taxon>
        <taxon>Pseudomonadati</taxon>
        <taxon>Bacteroidota</taxon>
        <taxon>Flavobacteriia</taxon>
        <taxon>Flavobacteriales</taxon>
        <taxon>Flavobacteriaceae</taxon>
        <taxon>Christiangramia</taxon>
    </lineage>
</organism>